<name>ADDB_STRPQ</name>
<organism>
    <name type="scientific">Streptococcus pyogenes serotype M3 (strain SSI-1)</name>
    <dbReference type="NCBI Taxonomy" id="193567"/>
    <lineage>
        <taxon>Bacteria</taxon>
        <taxon>Bacillati</taxon>
        <taxon>Bacillota</taxon>
        <taxon>Bacilli</taxon>
        <taxon>Lactobacillales</taxon>
        <taxon>Streptococcaceae</taxon>
        <taxon>Streptococcus</taxon>
    </lineage>
</organism>
<proteinExistence type="inferred from homology"/>
<protein>
    <recommendedName>
        <fullName evidence="1">ATP-dependent helicase/deoxyribonuclease subunit B</fullName>
        <ecNumber evidence="1">3.1.-.-</ecNumber>
    </recommendedName>
    <alternativeName>
        <fullName evidence="1">ATP-dependent helicase/nuclease subunit RexB</fullName>
    </alternativeName>
</protein>
<evidence type="ECO:0000255" key="1">
    <source>
        <dbReference type="HAMAP-Rule" id="MF_01453"/>
    </source>
</evidence>
<sequence length="1071" mass="124333">MKLIYTEMSYSMTEILVNEARKAADQGYRVFYIAPNSLSFEKEREVLTLLPERGTFSIIVTRFVQMSRYFTVESSPSKQHLDDTTLAMIFYRALMQLKPEDLPSYGRLQNNSVFIEQLVELYKELKNAQLSVHDLTGLDHPQKQEDLIKIIELAETIMIQQDYNQDSPLQSFARAIKLGLLNNQLSKTVVVIDGFSRFSAEEDYLLSLLNNNCQEVIIGSYVSQKAYQKSFIKGNIYEASLHFLQDLAQKYHIKPVFATSNQVFKPAFSRLTQLFEATHDFSQVDWQLQKNDLDHFSLWQCHHQKEEIEHVAKSIRQKLYEGYRYKDILVLLGDMDAYQLQIGPIFDKFEIPYYLGKAEPMAAHPLVQFIESLERSQRYNWRREDILNMLKSGLFGCFDDSDIDRFEEYTQFADIKGFTKFSKPFTINSSRQYPLDFLNEMRQDIVLPLQELFKSQKQLGASLVDKLILFLKKIRLAENMQGLAQSQLEVEKNEEVWKRFTDILTSFHHIFGQEKLRLSDCLALIKTGMKSAQYRVVPATLDVVTIKSYDLVQPHSKPFVYAIGLTQSHFPKQIHHSGLLSDQERARINEIRNYRHFDIASAENSKKNHQTALSLFNAATKELVLSVPTVINETFDDLSPYLKELINFGLPLLDKGKNYLSYDNSDIGNYKALLSQIIAINRQDLIEMSDQDKMFWTVVLRYLRKQLRKQQLELPTSDYRLSTKSLSKEVIEVCFPKRIPLKLSATALTVFYNNQYNYFLKYVLNLNKTESIHPDSRIHGQYLHRVFERLMKDHTQEPFDNKLKQAIYHTNQESFFQQIYQDNAEAEYSLAILEDIVRSTAPILQLNQNIQVIDQEKNFHLDMGNEILVHGIIDRIDQLSDGSLGIVDYKSSANQFDIGTFYNGLSPQLVTYLAALKQITPHDINQLFGAMYLHLQDPKLDLVTFKQIDNTLVESIYKALTYKGIFSEVEKEHLSTGAYQTKNALYSNDELETLLNYNRYLYLKAAKHIKKGHFLINPYTSDGKTVQGDQLKAITRFEADLDMGQARRLVTLPAKEKKECFLTLMRKESHL</sequence>
<gene>
    <name evidence="1" type="primary">rexB</name>
    <name type="ordered locus">SPs1341</name>
</gene>
<feature type="chain" id="PRO_0000411265" description="ATP-dependent helicase/deoxyribonuclease subunit B">
    <location>
        <begin position="1"/>
        <end position="1071"/>
    </location>
</feature>
<comment type="function">
    <text evidence="1">The heterodimer acts as both an ATP-dependent DNA helicase and an ATP-dependent, dual-direction single-stranded exonuclease. Recognizes the chi site generating a DNA molecule suitable for the initiation of homologous recombination. This subunit has 5' -&gt; 3' nuclease activity but not helicase activity.</text>
</comment>
<comment type="cofactor">
    <cofactor evidence="1">
        <name>Mg(2+)</name>
        <dbReference type="ChEBI" id="CHEBI:18420"/>
    </cofactor>
</comment>
<comment type="subunit">
    <text evidence="1">Heterodimer of AddA and RexB.</text>
</comment>
<comment type="miscellaneous">
    <text evidence="1">Despite having helicase-like domains, this subunit does not have helicase activity.</text>
</comment>
<comment type="similarity">
    <text evidence="1">Belongs to the helicase family. AddB/RexB type 2 subfamily.</text>
</comment>
<keyword id="KW-0067">ATP-binding</keyword>
<keyword id="KW-0227">DNA damage</keyword>
<keyword id="KW-0234">DNA repair</keyword>
<keyword id="KW-0238">DNA-binding</keyword>
<keyword id="KW-0269">Exonuclease</keyword>
<keyword id="KW-0347">Helicase</keyword>
<keyword id="KW-0378">Hydrolase</keyword>
<keyword id="KW-0540">Nuclease</keyword>
<keyword id="KW-0547">Nucleotide-binding</keyword>
<reference key="1">
    <citation type="journal article" date="2003" name="Genome Res.">
        <title>Genome sequence of an M3 strain of Streptococcus pyogenes reveals a large-scale genomic rearrangement in invasive strains and new insights into phage evolution.</title>
        <authorList>
            <person name="Nakagawa I."/>
            <person name="Kurokawa K."/>
            <person name="Yamashita A."/>
            <person name="Nakata M."/>
            <person name="Tomiyasu Y."/>
            <person name="Okahashi N."/>
            <person name="Kawabata S."/>
            <person name="Yamazaki K."/>
            <person name="Shiba T."/>
            <person name="Yasunaga T."/>
            <person name="Hayashi H."/>
            <person name="Hattori M."/>
            <person name="Hamada S."/>
        </authorList>
    </citation>
    <scope>NUCLEOTIDE SEQUENCE [LARGE SCALE GENOMIC DNA]</scope>
    <source>
        <strain>SSI-1</strain>
    </source>
</reference>
<dbReference type="EC" id="3.1.-.-" evidence="1"/>
<dbReference type="EMBL" id="BA000034">
    <property type="protein sequence ID" value="BAC64436.1"/>
    <property type="molecule type" value="Genomic_DNA"/>
</dbReference>
<dbReference type="RefSeq" id="WP_011054337.1">
    <property type="nucleotide sequence ID" value="NC_004606.1"/>
</dbReference>
<dbReference type="SMR" id="P0CZ55"/>
<dbReference type="KEGG" id="sps:SPs1341"/>
<dbReference type="HOGENOM" id="CLU_007838_1_0_9"/>
<dbReference type="GO" id="GO:0008409">
    <property type="term" value="F:5'-3' exonuclease activity"/>
    <property type="evidence" value="ECO:0007669"/>
    <property type="project" value="UniProtKB-UniRule"/>
</dbReference>
<dbReference type="GO" id="GO:0005524">
    <property type="term" value="F:ATP binding"/>
    <property type="evidence" value="ECO:0007669"/>
    <property type="project" value="UniProtKB-UniRule"/>
</dbReference>
<dbReference type="GO" id="GO:0003690">
    <property type="term" value="F:double-stranded DNA binding"/>
    <property type="evidence" value="ECO:0007669"/>
    <property type="project" value="UniProtKB-UniRule"/>
</dbReference>
<dbReference type="GO" id="GO:0004386">
    <property type="term" value="F:helicase activity"/>
    <property type="evidence" value="ECO:0007669"/>
    <property type="project" value="UniProtKB-KW"/>
</dbReference>
<dbReference type="GO" id="GO:0016817">
    <property type="term" value="F:hydrolase activity, acting on acid anhydrides"/>
    <property type="evidence" value="ECO:0007669"/>
    <property type="project" value="InterPro"/>
</dbReference>
<dbReference type="GO" id="GO:0000724">
    <property type="term" value="P:double-strand break repair via homologous recombination"/>
    <property type="evidence" value="ECO:0007669"/>
    <property type="project" value="UniProtKB-UniRule"/>
</dbReference>
<dbReference type="Gene3D" id="3.90.320.10">
    <property type="match status" value="1"/>
</dbReference>
<dbReference type="Gene3D" id="3.40.50.300">
    <property type="entry name" value="P-loop containing nucleotide triphosphate hydrolases"/>
    <property type="match status" value="3"/>
</dbReference>
<dbReference type="HAMAP" id="MF_01453">
    <property type="entry name" value="AddB_type2"/>
    <property type="match status" value="1"/>
</dbReference>
<dbReference type="InterPro" id="IPR049035">
    <property type="entry name" value="ADDB_N"/>
</dbReference>
<dbReference type="InterPro" id="IPR014141">
    <property type="entry name" value="DNA_helicase_suRexB"/>
</dbReference>
<dbReference type="InterPro" id="IPR027417">
    <property type="entry name" value="P-loop_NTPase"/>
</dbReference>
<dbReference type="InterPro" id="IPR011604">
    <property type="entry name" value="PDDEXK-like_dom_sf"/>
</dbReference>
<dbReference type="InterPro" id="IPR038726">
    <property type="entry name" value="PDDEXK_AddAB-type"/>
</dbReference>
<dbReference type="InterPro" id="IPR011335">
    <property type="entry name" value="Restrct_endonuc-II-like"/>
</dbReference>
<dbReference type="NCBIfam" id="TIGR02774">
    <property type="entry name" value="rexB_recomb"/>
    <property type="match status" value="1"/>
</dbReference>
<dbReference type="PANTHER" id="PTHR30591">
    <property type="entry name" value="RECBCD ENZYME SUBUNIT RECC"/>
    <property type="match status" value="1"/>
</dbReference>
<dbReference type="PANTHER" id="PTHR30591:SF1">
    <property type="entry name" value="RECBCD ENZYME SUBUNIT RECC"/>
    <property type="match status" value="1"/>
</dbReference>
<dbReference type="Pfam" id="PF21445">
    <property type="entry name" value="ADDB_N"/>
    <property type="match status" value="1"/>
</dbReference>
<dbReference type="Pfam" id="PF12705">
    <property type="entry name" value="PDDEXK_1"/>
    <property type="match status" value="1"/>
</dbReference>
<dbReference type="SUPFAM" id="SSF52540">
    <property type="entry name" value="P-loop containing nucleoside triphosphate hydrolases"/>
    <property type="match status" value="1"/>
</dbReference>
<dbReference type="SUPFAM" id="SSF52980">
    <property type="entry name" value="Restriction endonuclease-like"/>
    <property type="match status" value="1"/>
</dbReference>
<accession>P0CZ55</accession>
<accession>Q79WR0</accession>
<accession>Q8K816</accession>